<comment type="function">
    <text evidence="1">Reversibly transfers an adenylyl group from ATP to 4'-phosphopantetheine, yielding dephospho-CoA (dPCoA) and pyrophosphate.</text>
</comment>
<comment type="catalytic activity">
    <reaction evidence="1">
        <text>(R)-4'-phosphopantetheine + ATP + H(+) = 3'-dephospho-CoA + diphosphate</text>
        <dbReference type="Rhea" id="RHEA:19801"/>
        <dbReference type="ChEBI" id="CHEBI:15378"/>
        <dbReference type="ChEBI" id="CHEBI:30616"/>
        <dbReference type="ChEBI" id="CHEBI:33019"/>
        <dbReference type="ChEBI" id="CHEBI:57328"/>
        <dbReference type="ChEBI" id="CHEBI:61723"/>
        <dbReference type="EC" id="2.7.7.3"/>
    </reaction>
</comment>
<comment type="cofactor">
    <cofactor evidence="1">
        <name>Mg(2+)</name>
        <dbReference type="ChEBI" id="CHEBI:18420"/>
    </cofactor>
</comment>
<comment type="pathway">
    <text evidence="1">Cofactor biosynthesis; coenzyme A biosynthesis; CoA from (R)-pantothenate: step 4/5.</text>
</comment>
<comment type="subunit">
    <text evidence="1">Homohexamer.</text>
</comment>
<comment type="subcellular location">
    <subcellularLocation>
        <location evidence="1">Cytoplasm</location>
    </subcellularLocation>
</comment>
<comment type="similarity">
    <text evidence="1">Belongs to the bacterial CoaD family.</text>
</comment>
<keyword id="KW-0067">ATP-binding</keyword>
<keyword id="KW-0173">Coenzyme A biosynthesis</keyword>
<keyword id="KW-0963">Cytoplasm</keyword>
<keyword id="KW-0460">Magnesium</keyword>
<keyword id="KW-0547">Nucleotide-binding</keyword>
<keyword id="KW-0548">Nucleotidyltransferase</keyword>
<keyword id="KW-0808">Transferase</keyword>
<organism>
    <name type="scientific">Pseudomonas syringae pv. syringae (strain B728a)</name>
    <dbReference type="NCBI Taxonomy" id="205918"/>
    <lineage>
        <taxon>Bacteria</taxon>
        <taxon>Pseudomonadati</taxon>
        <taxon>Pseudomonadota</taxon>
        <taxon>Gammaproteobacteria</taxon>
        <taxon>Pseudomonadales</taxon>
        <taxon>Pseudomonadaceae</taxon>
        <taxon>Pseudomonas</taxon>
        <taxon>Pseudomonas syringae</taxon>
    </lineage>
</organism>
<proteinExistence type="inferred from homology"/>
<sequence>MNRVLYPGTFDPITKGHGDLVERASRLFDQVVIAVAASPKKNPLFPLEQRVELAREVTKHLPNVEVVGFSTLLAHFAKEQNANVFLRGLRAVSDFEYEFQLANMNRQLAPDVESLFLTPSERYSFISSTLVREIAALGGDITKFVHPAVAQALTERFKR</sequence>
<name>COAD_PSEU2</name>
<dbReference type="EC" id="2.7.7.3" evidence="1"/>
<dbReference type="EMBL" id="CP000075">
    <property type="protein sequence ID" value="AAY39785.1"/>
    <property type="molecule type" value="Genomic_DNA"/>
</dbReference>
<dbReference type="RefSeq" id="WP_003348749.1">
    <property type="nucleotide sequence ID" value="NC_007005.1"/>
</dbReference>
<dbReference type="RefSeq" id="YP_237823.1">
    <property type="nucleotide sequence ID" value="NC_007005.1"/>
</dbReference>
<dbReference type="SMR" id="Q4ZM37"/>
<dbReference type="STRING" id="205918.Psyr_4758"/>
<dbReference type="GeneID" id="77280597"/>
<dbReference type="KEGG" id="psb:Psyr_4758"/>
<dbReference type="PATRIC" id="fig|205918.7.peg.4910"/>
<dbReference type="eggNOG" id="COG0669">
    <property type="taxonomic scope" value="Bacteria"/>
</dbReference>
<dbReference type="HOGENOM" id="CLU_100149_0_1_6"/>
<dbReference type="OrthoDB" id="9806661at2"/>
<dbReference type="UniPathway" id="UPA00241">
    <property type="reaction ID" value="UER00355"/>
</dbReference>
<dbReference type="Proteomes" id="UP000000426">
    <property type="component" value="Chromosome"/>
</dbReference>
<dbReference type="GO" id="GO:0005737">
    <property type="term" value="C:cytoplasm"/>
    <property type="evidence" value="ECO:0007669"/>
    <property type="project" value="UniProtKB-SubCell"/>
</dbReference>
<dbReference type="GO" id="GO:0005524">
    <property type="term" value="F:ATP binding"/>
    <property type="evidence" value="ECO:0007669"/>
    <property type="project" value="UniProtKB-KW"/>
</dbReference>
<dbReference type="GO" id="GO:0004595">
    <property type="term" value="F:pantetheine-phosphate adenylyltransferase activity"/>
    <property type="evidence" value="ECO:0007669"/>
    <property type="project" value="UniProtKB-UniRule"/>
</dbReference>
<dbReference type="GO" id="GO:0015937">
    <property type="term" value="P:coenzyme A biosynthetic process"/>
    <property type="evidence" value="ECO:0007669"/>
    <property type="project" value="UniProtKB-UniRule"/>
</dbReference>
<dbReference type="CDD" id="cd02163">
    <property type="entry name" value="PPAT"/>
    <property type="match status" value="1"/>
</dbReference>
<dbReference type="Gene3D" id="3.40.50.620">
    <property type="entry name" value="HUPs"/>
    <property type="match status" value="1"/>
</dbReference>
<dbReference type="HAMAP" id="MF_00151">
    <property type="entry name" value="PPAT_bact"/>
    <property type="match status" value="1"/>
</dbReference>
<dbReference type="InterPro" id="IPR004821">
    <property type="entry name" value="Cyt_trans-like"/>
</dbReference>
<dbReference type="InterPro" id="IPR001980">
    <property type="entry name" value="PPAT"/>
</dbReference>
<dbReference type="InterPro" id="IPR014729">
    <property type="entry name" value="Rossmann-like_a/b/a_fold"/>
</dbReference>
<dbReference type="NCBIfam" id="TIGR01510">
    <property type="entry name" value="coaD_prev_kdtB"/>
    <property type="match status" value="1"/>
</dbReference>
<dbReference type="NCBIfam" id="TIGR00125">
    <property type="entry name" value="cyt_tran_rel"/>
    <property type="match status" value="1"/>
</dbReference>
<dbReference type="PANTHER" id="PTHR21342">
    <property type="entry name" value="PHOSPHOPANTETHEINE ADENYLYLTRANSFERASE"/>
    <property type="match status" value="1"/>
</dbReference>
<dbReference type="PANTHER" id="PTHR21342:SF1">
    <property type="entry name" value="PHOSPHOPANTETHEINE ADENYLYLTRANSFERASE"/>
    <property type="match status" value="1"/>
</dbReference>
<dbReference type="Pfam" id="PF01467">
    <property type="entry name" value="CTP_transf_like"/>
    <property type="match status" value="1"/>
</dbReference>
<dbReference type="PRINTS" id="PR01020">
    <property type="entry name" value="LPSBIOSNTHSS"/>
</dbReference>
<dbReference type="SUPFAM" id="SSF52374">
    <property type="entry name" value="Nucleotidylyl transferase"/>
    <property type="match status" value="1"/>
</dbReference>
<protein>
    <recommendedName>
        <fullName evidence="1">Phosphopantetheine adenylyltransferase</fullName>
        <ecNumber evidence="1">2.7.7.3</ecNumber>
    </recommendedName>
    <alternativeName>
        <fullName evidence="1">Dephospho-CoA pyrophosphorylase</fullName>
    </alternativeName>
    <alternativeName>
        <fullName evidence="1">Pantetheine-phosphate adenylyltransferase</fullName>
        <shortName evidence="1">PPAT</shortName>
    </alternativeName>
</protein>
<reference key="1">
    <citation type="journal article" date="2005" name="Proc. Natl. Acad. Sci. U.S.A.">
        <title>Comparison of the complete genome sequences of Pseudomonas syringae pv. syringae B728a and pv. tomato DC3000.</title>
        <authorList>
            <person name="Feil H."/>
            <person name="Feil W.S."/>
            <person name="Chain P."/>
            <person name="Larimer F."/>
            <person name="Dibartolo G."/>
            <person name="Copeland A."/>
            <person name="Lykidis A."/>
            <person name="Trong S."/>
            <person name="Nolan M."/>
            <person name="Goltsman E."/>
            <person name="Thiel J."/>
            <person name="Malfatti S."/>
            <person name="Loper J.E."/>
            <person name="Lapidus A."/>
            <person name="Detter J.C."/>
            <person name="Land M."/>
            <person name="Richardson P.M."/>
            <person name="Kyrpides N.C."/>
            <person name="Ivanova N."/>
            <person name="Lindow S.E."/>
        </authorList>
    </citation>
    <scope>NUCLEOTIDE SEQUENCE [LARGE SCALE GENOMIC DNA]</scope>
    <source>
        <strain>B728a</strain>
    </source>
</reference>
<evidence type="ECO:0000255" key="1">
    <source>
        <dbReference type="HAMAP-Rule" id="MF_00151"/>
    </source>
</evidence>
<feature type="chain" id="PRO_1000011212" description="Phosphopantetheine adenylyltransferase">
    <location>
        <begin position="1"/>
        <end position="159"/>
    </location>
</feature>
<feature type="binding site" evidence="1">
    <location>
        <begin position="9"/>
        <end position="10"/>
    </location>
    <ligand>
        <name>ATP</name>
        <dbReference type="ChEBI" id="CHEBI:30616"/>
    </ligand>
</feature>
<feature type="binding site" evidence="1">
    <location>
        <position position="9"/>
    </location>
    <ligand>
        <name>substrate</name>
    </ligand>
</feature>
<feature type="binding site" evidence="1">
    <location>
        <position position="17"/>
    </location>
    <ligand>
        <name>ATP</name>
        <dbReference type="ChEBI" id="CHEBI:30616"/>
    </ligand>
</feature>
<feature type="binding site" evidence="1">
    <location>
        <position position="41"/>
    </location>
    <ligand>
        <name>substrate</name>
    </ligand>
</feature>
<feature type="binding site" evidence="1">
    <location>
        <position position="73"/>
    </location>
    <ligand>
        <name>substrate</name>
    </ligand>
</feature>
<feature type="binding site" evidence="1">
    <location>
        <position position="87"/>
    </location>
    <ligand>
        <name>substrate</name>
    </ligand>
</feature>
<feature type="binding site" evidence="1">
    <location>
        <begin position="88"/>
        <end position="90"/>
    </location>
    <ligand>
        <name>ATP</name>
        <dbReference type="ChEBI" id="CHEBI:30616"/>
    </ligand>
</feature>
<feature type="binding site" evidence="1">
    <location>
        <position position="98"/>
    </location>
    <ligand>
        <name>ATP</name>
        <dbReference type="ChEBI" id="CHEBI:30616"/>
    </ligand>
</feature>
<feature type="binding site" evidence="1">
    <location>
        <begin position="123"/>
        <end position="129"/>
    </location>
    <ligand>
        <name>ATP</name>
        <dbReference type="ChEBI" id="CHEBI:30616"/>
    </ligand>
</feature>
<feature type="site" description="Transition state stabilizer" evidence="1">
    <location>
        <position position="17"/>
    </location>
</feature>
<accession>Q4ZM37</accession>
<gene>
    <name evidence="1" type="primary">coaD</name>
    <name type="ordered locus">Psyr_4758</name>
</gene>